<sequence length="70" mass="7924">MLKMGVVLFIFLVLFPLATLQLDADQPVERYAENKQLLSPDERREIILHALGTRCCSWDVCDHPSCTCCG</sequence>
<comment type="function">
    <molecule>Conotoxin tx3a-a</molecule>
    <text evidence="2 8">Intracranial injection into mice causes scratching and hyperactivity (PubMed:15924437). In vitro, inhibits proliferation of the mice ovarian cancer cells ID8 (PubMed:36235146).</text>
</comment>
<comment type="subcellular location">
    <subcellularLocation>
        <location evidence="2 8">Secreted</location>
    </subcellularLocation>
</comment>
<comment type="tissue specificity">
    <text evidence="14 16 17">Expressed by the venom duct. Is present in all duct parts with a highest content in part 2 (proximal of the venom bulb) and then decreases in concentration toward the end of the duct.</text>
</comment>
<comment type="domain">
    <text evidence="13">The cysteine framework is III (CC-C-C-CC). Classified in the M-1 branch, since 1 residue stands between the fourth and the fifth cysteine residues.</text>
</comment>
<comment type="PTM">
    <text evidence="2 3 5 6">Two short peptides are produced from this precursor; Conotoxin tx3a-b is amidated at Cys-69 (but has no bromotryptophan), whereas conotoxin tx3a-a has an unmodified Gly-70 and a bromotryptophan (PubMed:15924437, PubMed:17042781, PubMed:19380747, PubMed:22709442). Two elongated peptides are also produced; Conotoxin elongated-tx3a-b is amidated at Cys-69 (but has no bromotryptophan), whereas conotoxin elongated tx3a-a has an unmodified Gly-70 (but has no bromotryptophan) (PubMed:22709442).</text>
</comment>
<comment type="PTM">
    <molecule>Conotoxin tx3a-a</molecule>
    <text evidence="8">Ju et al. (2022) describe a disulfide connectivity (C55-C61; C56-C69; C66-C68) that differs from that of Han and colleagues (2006), McDougal et al. (2008), and Ueberheide et al. (2009).</text>
</comment>
<comment type="mass spectrometry" mass="1653.455" error="0.02" method="Electrospray" evidence="5">
    <molecule>Conotoxin tx3a-b</molecule>
    <text>With amidation at Cys-69.</text>
</comment>
<comment type="mass spectrometry" mass="1712.5" method="Electrospray" evidence="2">
    <molecule>Conotoxin tx3a-a</molecule>
</comment>
<comment type="mass spectrometry" mass="1711.458" error="0.02" method="Electrospray" evidence="5">
    <molecule>Conotoxin tx3a-a</molecule>
</comment>
<comment type="miscellaneous">
    <molecule>Conotoxin tx3a-a</molecule>
    <text evidence="8">Shows a very weak inhibition on Nav1.4 and Nav1.8 sodium channels.</text>
</comment>
<comment type="similarity">
    <text evidence="13">Belongs to the conotoxin M superfamily.</text>
</comment>
<keyword id="KW-0027">Amidation</keyword>
<keyword id="KW-0102">Bromination</keyword>
<keyword id="KW-0903">Direct protein sequencing</keyword>
<keyword id="KW-1015">Disulfide bond</keyword>
<keyword id="KW-0528">Neurotoxin</keyword>
<keyword id="KW-0964">Secreted</keyword>
<keyword id="KW-0732">Signal</keyword>
<keyword id="KW-0800">Toxin</keyword>
<proteinExistence type="evidence at protein level"/>
<accession>Q9BH73</accession>
<organism>
    <name type="scientific">Conus textile</name>
    <name type="common">Cloth-of-gold cone</name>
    <dbReference type="NCBI Taxonomy" id="6494"/>
    <lineage>
        <taxon>Eukaryota</taxon>
        <taxon>Metazoa</taxon>
        <taxon>Spiralia</taxon>
        <taxon>Lophotrochozoa</taxon>
        <taxon>Mollusca</taxon>
        <taxon>Gastropoda</taxon>
        <taxon>Caenogastropoda</taxon>
        <taxon>Neogastropoda</taxon>
        <taxon>Conoidea</taxon>
        <taxon>Conidae</taxon>
        <taxon>Conus</taxon>
        <taxon>Cylinder</taxon>
    </lineage>
</organism>
<name>CM3A_CONTE</name>
<evidence type="ECO:0000255" key="1"/>
<evidence type="ECO:0000269" key="2">
    <source>
    </source>
</evidence>
<evidence type="ECO:0000269" key="3">
    <source>
    </source>
</evidence>
<evidence type="ECO:0000269" key="4">
    <source>
    </source>
</evidence>
<evidence type="ECO:0000269" key="5">
    <source>
    </source>
</evidence>
<evidence type="ECO:0000269" key="6">
    <source>
    </source>
</evidence>
<evidence type="ECO:0000269" key="7">
    <source>
    </source>
</evidence>
<evidence type="ECO:0000269" key="8">
    <source>
    </source>
</evidence>
<evidence type="ECO:0000303" key="9">
    <source>
    </source>
</evidence>
<evidence type="ECO:0000303" key="10">
    <source>
    </source>
</evidence>
<evidence type="ECO:0000303" key="11">
    <source>
    </source>
</evidence>
<evidence type="ECO:0000303" key="12">
    <source>
    </source>
</evidence>
<evidence type="ECO:0000305" key="13"/>
<evidence type="ECO:0000305" key="14">
    <source>
    </source>
</evidence>
<evidence type="ECO:0000305" key="15">
    <source>
    </source>
</evidence>
<evidence type="ECO:0000305" key="16">
    <source>
    </source>
</evidence>
<evidence type="ECO:0000305" key="17">
    <source>
    </source>
</evidence>
<feature type="signal peptide" evidence="1">
    <location>
        <begin position="1"/>
        <end position="24"/>
    </location>
</feature>
<feature type="propeptide" id="PRO_0000246053" evidence="15">
    <location>
        <begin position="25"/>
        <end position="44"/>
    </location>
</feature>
<feature type="peptide" id="PRO_0000445119" description="Conotoxin elongated-tx3a-a" evidence="16">
    <location>
        <begin position="45"/>
        <end position="70"/>
    </location>
</feature>
<feature type="peptide" id="PRO_0000445120" description="Conotoxin elongated-tx3a-b" evidence="16">
    <location>
        <begin position="45"/>
        <end position="69"/>
    </location>
</feature>
<feature type="peptide" id="PRO_0000371305" description="Conotoxin tx3a-a" evidence="2 3 5 8 15">
    <location>
        <begin position="55"/>
        <end position="70"/>
    </location>
</feature>
<feature type="peptide" id="PRO_0000246054" description="Conotoxin tx3a-b" evidence="5 15 16">
    <location>
        <begin position="55"/>
        <end position="69"/>
    </location>
</feature>
<feature type="modified residue" description="6'-bromotryptophan; partial" evidence="6">
    <location>
        <position position="58"/>
    </location>
</feature>
<feature type="modified residue" description="Cysteine amide; partial" evidence="2 3 5 6 7">
    <location>
        <position position="69"/>
    </location>
</feature>
<feature type="disulfide bond" evidence="3 4 5">
    <location>
        <begin position="55"/>
        <end position="68"/>
    </location>
</feature>
<feature type="disulfide bond" evidence="3 4 5">
    <location>
        <begin position="56"/>
        <end position="66"/>
    </location>
</feature>
<feature type="disulfide bond" evidence="3 4 5">
    <location>
        <begin position="61"/>
        <end position="69"/>
    </location>
</feature>
<dbReference type="EMBL" id="AF215090">
    <property type="protein sequence ID" value="AAG60511.1"/>
    <property type="molecule type" value="mRNA"/>
</dbReference>
<dbReference type="EMBL" id="AF214953">
    <property type="protein sequence ID" value="AAG60381.1"/>
    <property type="molecule type" value="mRNA"/>
</dbReference>
<dbReference type="ConoServer" id="640">
    <property type="toxin name" value="TxIIIA precursor"/>
</dbReference>
<dbReference type="GO" id="GO:0005576">
    <property type="term" value="C:extracellular region"/>
    <property type="evidence" value="ECO:0007669"/>
    <property type="project" value="UniProtKB-SubCell"/>
</dbReference>
<dbReference type="GO" id="GO:0008200">
    <property type="term" value="F:ion channel inhibitor activity"/>
    <property type="evidence" value="ECO:0007669"/>
    <property type="project" value="InterPro"/>
</dbReference>
<dbReference type="GO" id="GO:0090729">
    <property type="term" value="F:toxin activity"/>
    <property type="evidence" value="ECO:0007669"/>
    <property type="project" value="UniProtKB-KW"/>
</dbReference>
<dbReference type="InterPro" id="IPR004214">
    <property type="entry name" value="Conotoxin"/>
</dbReference>
<dbReference type="Pfam" id="PF02950">
    <property type="entry name" value="Conotoxin"/>
    <property type="match status" value="1"/>
</dbReference>
<reference key="1">
    <citation type="journal article" date="2001" name="Mol. Biol. Evol.">
        <title>Mechanisms for evolving hypervariability: the case of conopeptides.</title>
        <authorList>
            <person name="Conticello S.G."/>
            <person name="Gilad Y."/>
            <person name="Avidan N."/>
            <person name="Ben-Asher E."/>
            <person name="Levy Z."/>
            <person name="Fainzilber M."/>
        </authorList>
    </citation>
    <scope>NUCLEOTIDE SEQUENCE [MRNA]</scope>
    <source>
        <tissue>Venom duct</tissue>
    </source>
</reference>
<reference key="2">
    <citation type="journal article" date="2005" name="Biochemistry">
        <title>Definition of the M-conotoxin superfamily: characterization of novel peptides from molluscivorous Conus venoms.</title>
        <authorList>
            <person name="Corpuz G.P."/>
            <person name="Jacobsen R.B."/>
            <person name="Jimenez E.C."/>
            <person name="Watkins M."/>
            <person name="Walker C."/>
            <person name="Colledge C."/>
            <person name="Garrett J.E."/>
            <person name="McDougal O."/>
            <person name="Li W."/>
            <person name="Gray W.R."/>
            <person name="Hillyard D.R."/>
            <person name="Rivier J."/>
            <person name="McIntosh J.M."/>
            <person name="Cruz L.J."/>
            <person name="Olivera B.M."/>
        </authorList>
    </citation>
    <scope>NUCLEOTIDE SEQUENCE [MRNA]</scope>
    <scope>PROTEIN SEQUENCE OF 55-70</scope>
    <scope>MASS SPECTROMETRY</scope>
    <scope>SUBCELLULAR LOCATION</scope>
    <scope>BIOASSAY</scope>
    <scope>FUNCTION</scope>
    <source>
        <tissue>Venom</tissue>
        <tissue>Venom duct</tissue>
    </source>
</reference>
<reference key="3">
    <citation type="journal article" date="2006" name="FEBS J.">
        <title>Characterization of novel M-superfamily conotoxins with new disulfide linkage.</title>
        <authorList>
            <person name="Han Y.-H."/>
            <person name="Wang Q."/>
            <person name="Jiang H."/>
            <person name="Liu L."/>
            <person name="Xiao C."/>
            <person name="Yuan D.-D."/>
            <person name="Shao X.-X."/>
            <person name="Dai Q.-Y."/>
            <person name="Cheng J.-S."/>
            <person name="Chi C.-W."/>
        </authorList>
    </citation>
    <scope>PROTEIN SEQUENCE OF 55-70</scope>
    <scope>DISULFIDE BONDS</scope>
    <scope>SYNTHESIS OF 55-70</scope>
    <source>
        <tissue>Venom</tissue>
    </source>
</reference>
<reference key="4">
    <citation type="journal article" date="2009" name="Proc. Natl. Acad. Sci. U.S.A.">
        <title>Rapid sensitive analysis of cysteine rich peptide venom components.</title>
        <authorList>
            <person name="Ueberheide B.M."/>
            <person name="Fenyo D."/>
            <person name="Alewood P.F."/>
            <person name="Chait B.T."/>
        </authorList>
    </citation>
    <scope>PROTEIN SEQUENCE OF 55-70</scope>
    <scope>SUBCELLULAR LOCATION</scope>
    <scope>MASS SPECTROMETRY</scope>
    <scope>DISULFIDE BONDS</scope>
    <scope>AMIDATION AT CYS-69</scope>
    <source>
        <tissue>Venom</tissue>
    </source>
</reference>
<reference key="5">
    <citation type="journal article" date="2022" name="Molecules">
        <title>Anti-ovarian cancer conotoxins identified from Conus venom.</title>
        <authorList>
            <person name="Ju S."/>
            <person name="Zhang Y."/>
            <person name="Guo X."/>
            <person name="Yan Q."/>
            <person name="Liu S."/>
            <person name="Ma B."/>
            <person name="Zhang M."/>
            <person name="Bao J."/>
            <person name="Luo S."/>
            <person name="Fu Y."/>
        </authorList>
    </citation>
    <scope>PROTEIN SEQUENCE OF 55-70</scope>
    <scope>IDENTIFICATION BY MASS SPECTROMETRY</scope>
    <scope>FUNCTION</scope>
    <scope>SUBCELLULAR LOCATION</scope>
    <scope>DISULFIDE BONDS</scope>
    <scope>SYNTHESIS</scope>
    <source>
        <tissue>Venom</tissue>
    </source>
</reference>
<reference key="6">
    <citation type="journal article" date="2012" name="J. Proteome Res.">
        <title>Constrained de novo sequencing of conotoxins.</title>
        <authorList>
            <person name="Bhatia S."/>
            <person name="Kil Y.J."/>
            <person name="Ueberheide B."/>
            <person name="Chait B.T."/>
            <person name="Tayo L."/>
            <person name="Cruz L."/>
            <person name="Lu B."/>
            <person name="Yates J.R. III"/>
            <person name="Bern M."/>
        </authorList>
    </citation>
    <scope>IDENTIFICATION BY MASS SPECTROMETRY</scope>
    <scope>SUBCELLULAR LOCATION</scope>
    <scope>BROMINATION AT TRP-58</scope>
    <scope>AMIDATION AT CYS-69</scope>
    <source>
        <tissue>Venom</tissue>
    </source>
</reference>
<reference key="7">
    <citation type="journal article" date="2012" name="Toxicon">
        <title>Secretion and maturation of conotoxins in the venom ducts of Conus textile.</title>
        <authorList>
            <person name="Dobson R."/>
            <person name="Collodoro M."/>
            <person name="Gilles N."/>
            <person name="Turtoi A."/>
            <person name="De Pauw E."/>
            <person name="Quinton L."/>
        </authorList>
    </citation>
    <scope>IDENTIFICATION BY MASS SPECTROMETRY</scope>
    <scope>TISSUE SPECIFICITY</scope>
    <scope>POSITION IN VENOM DUCT</scope>
    <scope>AMIDATION AT CYS-69</scope>
    <source>
        <tissue>Venom</tissue>
    </source>
</reference>
<reference key="8">
    <citation type="journal article" date="2008" name="Biochemistry">
        <title>Three-dimensional structure of conotoxin tx3a: an m-1 branch peptide of the M-superfamily.</title>
        <authorList>
            <person name="McDougal O.M."/>
            <person name="Turner M.W."/>
            <person name="Ormond A.J."/>
            <person name="Poulter C.D."/>
        </authorList>
    </citation>
    <scope>STRUCTURE BY NMR OF 55-69</scope>
    <scope>DISULFIDE BONDS</scope>
</reference>
<protein>
    <recommendedName>
        <fullName evidence="13">Conotoxin elongated-tx3a-a</fullName>
    </recommendedName>
    <component>
        <recommendedName>
            <fullName evidence="13">Conotoxin tx3a-b</fullName>
        </recommendedName>
        <alternativeName>
            <fullName evidence="9 10 11">Tx3a</fullName>
        </alternativeName>
    </component>
    <component>
        <recommendedName>
            <fullName evidence="13">Conotoxin tx3a-a</fullName>
        </recommendedName>
        <alternativeName>
            <fullName evidence="12">Conotoxin Tx3a.1</fullName>
        </alternativeName>
        <alternativeName>
            <fullName evidence="9 10">Tx3.2</fullName>
        </alternativeName>
        <alternativeName>
            <fullName evidence="9 10 11">Tx3a</fullName>
        </alternativeName>
    </component>
    <component>
        <recommendedName>
            <fullName evidence="13">Conotoxin elongated-tx3a-b</fullName>
        </recommendedName>
    </component>
</protein>